<feature type="chain" id="PRO_0000244135" description="Ribosome maturation factor RimM">
    <location>
        <begin position="1"/>
        <end position="187"/>
    </location>
</feature>
<feature type="domain" description="PRC barrel" evidence="1">
    <location>
        <begin position="94"/>
        <end position="168"/>
    </location>
</feature>
<feature type="region of interest" description="Disordered" evidence="2">
    <location>
        <begin position="167"/>
        <end position="187"/>
    </location>
</feature>
<dbReference type="EMBL" id="CP000264">
    <property type="protein sequence ID" value="ABD53665.1"/>
    <property type="molecule type" value="Genomic_DNA"/>
</dbReference>
<dbReference type="RefSeq" id="WP_011453873.1">
    <property type="nucleotide sequence ID" value="NC_007802.1"/>
</dbReference>
<dbReference type="SMR" id="Q28UE7"/>
<dbReference type="STRING" id="290400.Jann_0748"/>
<dbReference type="KEGG" id="jan:Jann_0748"/>
<dbReference type="eggNOG" id="COG0806">
    <property type="taxonomic scope" value="Bacteria"/>
</dbReference>
<dbReference type="HOGENOM" id="CLU_077636_0_1_5"/>
<dbReference type="OrthoDB" id="9788191at2"/>
<dbReference type="Proteomes" id="UP000008326">
    <property type="component" value="Chromosome"/>
</dbReference>
<dbReference type="GO" id="GO:0005737">
    <property type="term" value="C:cytoplasm"/>
    <property type="evidence" value="ECO:0007669"/>
    <property type="project" value="UniProtKB-SubCell"/>
</dbReference>
<dbReference type="GO" id="GO:0005840">
    <property type="term" value="C:ribosome"/>
    <property type="evidence" value="ECO:0007669"/>
    <property type="project" value="InterPro"/>
</dbReference>
<dbReference type="GO" id="GO:0043022">
    <property type="term" value="F:ribosome binding"/>
    <property type="evidence" value="ECO:0007669"/>
    <property type="project" value="InterPro"/>
</dbReference>
<dbReference type="GO" id="GO:0042274">
    <property type="term" value="P:ribosomal small subunit biogenesis"/>
    <property type="evidence" value="ECO:0007669"/>
    <property type="project" value="UniProtKB-UniRule"/>
</dbReference>
<dbReference type="GO" id="GO:0006364">
    <property type="term" value="P:rRNA processing"/>
    <property type="evidence" value="ECO:0007669"/>
    <property type="project" value="UniProtKB-UniRule"/>
</dbReference>
<dbReference type="Gene3D" id="2.30.30.240">
    <property type="entry name" value="PRC-barrel domain"/>
    <property type="match status" value="1"/>
</dbReference>
<dbReference type="Gene3D" id="2.40.30.60">
    <property type="entry name" value="RimM"/>
    <property type="match status" value="1"/>
</dbReference>
<dbReference type="HAMAP" id="MF_00014">
    <property type="entry name" value="Ribosome_mat_RimM"/>
    <property type="match status" value="1"/>
</dbReference>
<dbReference type="InterPro" id="IPR011033">
    <property type="entry name" value="PRC_barrel-like_sf"/>
</dbReference>
<dbReference type="InterPro" id="IPR056792">
    <property type="entry name" value="PRC_RimM"/>
</dbReference>
<dbReference type="InterPro" id="IPR011961">
    <property type="entry name" value="RimM"/>
</dbReference>
<dbReference type="InterPro" id="IPR002676">
    <property type="entry name" value="RimM_N"/>
</dbReference>
<dbReference type="InterPro" id="IPR036976">
    <property type="entry name" value="RimM_N_sf"/>
</dbReference>
<dbReference type="InterPro" id="IPR009000">
    <property type="entry name" value="Transl_B-barrel_sf"/>
</dbReference>
<dbReference type="NCBIfam" id="TIGR02273">
    <property type="entry name" value="16S_RimM"/>
    <property type="match status" value="1"/>
</dbReference>
<dbReference type="PANTHER" id="PTHR33692">
    <property type="entry name" value="RIBOSOME MATURATION FACTOR RIMM"/>
    <property type="match status" value="1"/>
</dbReference>
<dbReference type="PANTHER" id="PTHR33692:SF1">
    <property type="entry name" value="RIBOSOME MATURATION FACTOR RIMM"/>
    <property type="match status" value="1"/>
</dbReference>
<dbReference type="Pfam" id="PF24986">
    <property type="entry name" value="PRC_RimM"/>
    <property type="match status" value="1"/>
</dbReference>
<dbReference type="Pfam" id="PF01782">
    <property type="entry name" value="RimM"/>
    <property type="match status" value="1"/>
</dbReference>
<dbReference type="SUPFAM" id="SSF50346">
    <property type="entry name" value="PRC-barrel domain"/>
    <property type="match status" value="1"/>
</dbReference>
<dbReference type="SUPFAM" id="SSF50447">
    <property type="entry name" value="Translation proteins"/>
    <property type="match status" value="1"/>
</dbReference>
<gene>
    <name evidence="1" type="primary">rimM</name>
    <name type="ordered locus">Jann_0748</name>
</gene>
<accession>Q28UE7</accession>
<name>RIMM_JANSC</name>
<evidence type="ECO:0000255" key="1">
    <source>
        <dbReference type="HAMAP-Rule" id="MF_00014"/>
    </source>
</evidence>
<evidence type="ECO:0000256" key="2">
    <source>
        <dbReference type="SAM" id="MobiDB-lite"/>
    </source>
</evidence>
<reference key="1">
    <citation type="submission" date="2006-02" db="EMBL/GenBank/DDBJ databases">
        <title>Complete sequence of chromosome of Jannaschia sp. CCS1.</title>
        <authorList>
            <consortium name="US DOE Joint Genome Institute"/>
            <person name="Copeland A."/>
            <person name="Lucas S."/>
            <person name="Lapidus A."/>
            <person name="Barry K."/>
            <person name="Detter J.C."/>
            <person name="Glavina del Rio T."/>
            <person name="Hammon N."/>
            <person name="Israni S."/>
            <person name="Pitluck S."/>
            <person name="Brettin T."/>
            <person name="Bruce D."/>
            <person name="Han C."/>
            <person name="Tapia R."/>
            <person name="Gilna P."/>
            <person name="Chertkov O."/>
            <person name="Saunders E."/>
            <person name="Schmutz J."/>
            <person name="Larimer F."/>
            <person name="Land M."/>
            <person name="Kyrpides N."/>
            <person name="Lykidis A."/>
            <person name="Moran M.A."/>
            <person name="Belas R."/>
            <person name="Ye W."/>
            <person name="Buchan A."/>
            <person name="Gonzalez J.M."/>
            <person name="Schell M.A."/>
            <person name="Richardson P."/>
        </authorList>
    </citation>
    <scope>NUCLEOTIDE SEQUENCE [LARGE SCALE GENOMIC DNA]</scope>
    <source>
        <strain>CCS1</strain>
    </source>
</reference>
<sequence>MTNPDHTCVGAISGSFGVRGEVRLKSFCAEPSDIGSYGPLSTEDGAQTYTITLTRPVKAGYAAMLSGVATKEDADALRGTRLYAPRSALPSLPDDEFYHADLVGLTVLDTGGEVIGTVASVANHGAGDILELSGPGLPSGLLIPFTLAVVPTVDIAAGRVIVDMPDGLIGGDKPDTSDTAPLGQDFD</sequence>
<comment type="function">
    <text evidence="1">An accessory protein needed during the final step in the assembly of 30S ribosomal subunit, possibly for assembly of the head region. Essential for efficient processing of 16S rRNA. May be needed both before and after RbfA during the maturation of 16S rRNA. It has affinity for free ribosomal 30S subunits but not for 70S ribosomes.</text>
</comment>
<comment type="subunit">
    <text evidence="1">Binds ribosomal protein uS19.</text>
</comment>
<comment type="subcellular location">
    <subcellularLocation>
        <location evidence="1">Cytoplasm</location>
    </subcellularLocation>
</comment>
<comment type="domain">
    <text evidence="1">The PRC barrel domain binds ribosomal protein uS19.</text>
</comment>
<comment type="similarity">
    <text evidence="1">Belongs to the RimM family.</text>
</comment>
<keyword id="KW-0143">Chaperone</keyword>
<keyword id="KW-0963">Cytoplasm</keyword>
<keyword id="KW-1185">Reference proteome</keyword>
<keyword id="KW-0690">Ribosome biogenesis</keyword>
<keyword id="KW-0698">rRNA processing</keyword>
<organism>
    <name type="scientific">Jannaschia sp. (strain CCS1)</name>
    <dbReference type="NCBI Taxonomy" id="290400"/>
    <lineage>
        <taxon>Bacteria</taxon>
        <taxon>Pseudomonadati</taxon>
        <taxon>Pseudomonadota</taxon>
        <taxon>Alphaproteobacteria</taxon>
        <taxon>Rhodobacterales</taxon>
        <taxon>Roseobacteraceae</taxon>
        <taxon>Jannaschia</taxon>
    </lineage>
</organism>
<protein>
    <recommendedName>
        <fullName evidence="1">Ribosome maturation factor RimM</fullName>
    </recommendedName>
</protein>
<proteinExistence type="inferred from homology"/>